<evidence type="ECO:0000255" key="1">
    <source>
        <dbReference type="HAMAP-Rule" id="MF_00435"/>
    </source>
</evidence>
<evidence type="ECO:0000255" key="2">
    <source>
        <dbReference type="PROSITE-ProRule" id="PRU01197"/>
    </source>
</evidence>
<evidence type="ECO:0000255" key="3">
    <source>
        <dbReference type="PROSITE-ProRule" id="PRU01198"/>
    </source>
</evidence>
<feature type="chain" id="PRO_0000151374" description="Ketol-acid reductoisomerase (NADP(+))">
    <location>
        <begin position="1"/>
        <end position="337"/>
    </location>
</feature>
<feature type="domain" description="KARI N-terminal Rossmann" evidence="2">
    <location>
        <begin position="1"/>
        <end position="181"/>
    </location>
</feature>
<feature type="domain" description="KARI C-terminal knotted" evidence="3">
    <location>
        <begin position="182"/>
        <end position="328"/>
    </location>
</feature>
<feature type="active site" evidence="1">
    <location>
        <position position="107"/>
    </location>
</feature>
<feature type="binding site" evidence="1">
    <location>
        <begin position="24"/>
        <end position="27"/>
    </location>
    <ligand>
        <name>NADP(+)</name>
        <dbReference type="ChEBI" id="CHEBI:58349"/>
    </ligand>
</feature>
<feature type="binding site" evidence="1">
    <location>
        <position position="47"/>
    </location>
    <ligand>
        <name>NADP(+)</name>
        <dbReference type="ChEBI" id="CHEBI:58349"/>
    </ligand>
</feature>
<feature type="binding site" evidence="1">
    <location>
        <position position="50"/>
    </location>
    <ligand>
        <name>NADP(+)</name>
        <dbReference type="ChEBI" id="CHEBI:58349"/>
    </ligand>
</feature>
<feature type="binding site" evidence="1">
    <location>
        <position position="52"/>
    </location>
    <ligand>
        <name>NADP(+)</name>
        <dbReference type="ChEBI" id="CHEBI:58349"/>
    </ligand>
</feature>
<feature type="binding site" evidence="1">
    <location>
        <begin position="82"/>
        <end position="85"/>
    </location>
    <ligand>
        <name>NADP(+)</name>
        <dbReference type="ChEBI" id="CHEBI:58349"/>
    </ligand>
</feature>
<feature type="binding site" evidence="1">
    <location>
        <position position="133"/>
    </location>
    <ligand>
        <name>NADP(+)</name>
        <dbReference type="ChEBI" id="CHEBI:58349"/>
    </ligand>
</feature>
<feature type="binding site" evidence="1">
    <location>
        <position position="190"/>
    </location>
    <ligand>
        <name>Mg(2+)</name>
        <dbReference type="ChEBI" id="CHEBI:18420"/>
        <label>1</label>
    </ligand>
</feature>
<feature type="binding site" evidence="1">
    <location>
        <position position="190"/>
    </location>
    <ligand>
        <name>Mg(2+)</name>
        <dbReference type="ChEBI" id="CHEBI:18420"/>
        <label>2</label>
    </ligand>
</feature>
<feature type="binding site" evidence="1">
    <location>
        <position position="194"/>
    </location>
    <ligand>
        <name>Mg(2+)</name>
        <dbReference type="ChEBI" id="CHEBI:18420"/>
        <label>1</label>
    </ligand>
</feature>
<feature type="binding site" evidence="1">
    <location>
        <position position="226"/>
    </location>
    <ligand>
        <name>Mg(2+)</name>
        <dbReference type="ChEBI" id="CHEBI:18420"/>
        <label>2</label>
    </ligand>
</feature>
<feature type="binding site" evidence="1">
    <location>
        <position position="230"/>
    </location>
    <ligand>
        <name>Mg(2+)</name>
        <dbReference type="ChEBI" id="CHEBI:18420"/>
        <label>2</label>
    </ligand>
</feature>
<feature type="binding site" evidence="1">
    <location>
        <position position="251"/>
    </location>
    <ligand>
        <name>substrate</name>
    </ligand>
</feature>
<accession>Q72JC8</accession>
<proteinExistence type="inferred from homology"/>
<sequence>MKIYYEHDADLGFILGKKVAVLGFGSQGHAHALNLKDSGVDVRVGLRKGSRSWEKAEAAGLRVLPVAEAVREADVVMVLLPDEKQAQVYREEVEPNLKEGGALAFAHGFNVHFGQIKPRKDLDVWMVAPKGPGHLVRSEYQKGSGVPALVAVHQDASGSAFPTALAYAKAIGAARAGVIATTFKDETETDLFGEQAVLCGGLTRLIRAGFETLVEAGYPPEMAYFETVHEVKLIVDLIYEAGLKGMRYSISNTAEYGDYTRGDLAVPLEETKRRMREILRQIQSGEFAREWMLENQVGSPVLEANRKRWAAHPIEEVGSRLRAMMPFLKARVMEEVG</sequence>
<protein>
    <recommendedName>
        <fullName evidence="1">Ketol-acid reductoisomerase (NADP(+))</fullName>
        <shortName evidence="1">KARI</shortName>
        <ecNumber evidence="1">1.1.1.86</ecNumber>
    </recommendedName>
    <alternativeName>
        <fullName evidence="1">Acetohydroxy-acid isomeroreductase</fullName>
        <shortName evidence="1">AHIR</shortName>
    </alternativeName>
    <alternativeName>
        <fullName evidence="1">Alpha-keto-beta-hydroxylacyl reductoisomerase</fullName>
    </alternativeName>
    <alternativeName>
        <fullName evidence="1">Ketol-acid reductoisomerase type 1</fullName>
    </alternativeName>
    <alternativeName>
        <fullName evidence="1">Ketol-acid reductoisomerase type I</fullName>
    </alternativeName>
</protein>
<comment type="function">
    <text evidence="1">Involved in the biosynthesis of branched-chain amino acids (BCAA). Catalyzes an alkyl-migration followed by a ketol-acid reduction of (S)-2-acetolactate (S2AL) to yield (R)-2,3-dihydroxy-isovalerate. In the isomerase reaction, S2AL is rearranged via a Mg-dependent methyl migration to produce 3-hydroxy-3-methyl-2-ketobutyrate (HMKB). In the reductase reaction, this 2-ketoacid undergoes a metal-dependent reduction by NADPH to yield (R)-2,3-dihydroxy-isovalerate.</text>
</comment>
<comment type="catalytic activity">
    <reaction evidence="1">
        <text>(2R)-2,3-dihydroxy-3-methylbutanoate + NADP(+) = (2S)-2-acetolactate + NADPH + H(+)</text>
        <dbReference type="Rhea" id="RHEA:22068"/>
        <dbReference type="ChEBI" id="CHEBI:15378"/>
        <dbReference type="ChEBI" id="CHEBI:49072"/>
        <dbReference type="ChEBI" id="CHEBI:57783"/>
        <dbReference type="ChEBI" id="CHEBI:58349"/>
        <dbReference type="ChEBI" id="CHEBI:58476"/>
        <dbReference type="EC" id="1.1.1.86"/>
    </reaction>
</comment>
<comment type="catalytic activity">
    <reaction evidence="1">
        <text>(2R,3R)-2,3-dihydroxy-3-methylpentanoate + NADP(+) = (S)-2-ethyl-2-hydroxy-3-oxobutanoate + NADPH + H(+)</text>
        <dbReference type="Rhea" id="RHEA:13493"/>
        <dbReference type="ChEBI" id="CHEBI:15378"/>
        <dbReference type="ChEBI" id="CHEBI:49256"/>
        <dbReference type="ChEBI" id="CHEBI:49258"/>
        <dbReference type="ChEBI" id="CHEBI:57783"/>
        <dbReference type="ChEBI" id="CHEBI:58349"/>
        <dbReference type="EC" id="1.1.1.86"/>
    </reaction>
</comment>
<comment type="cofactor">
    <cofactor evidence="1">
        <name>Mg(2+)</name>
        <dbReference type="ChEBI" id="CHEBI:18420"/>
    </cofactor>
    <text evidence="1">Binds 2 magnesium ions per subunit.</text>
</comment>
<comment type="pathway">
    <text evidence="1">Amino-acid biosynthesis; L-isoleucine biosynthesis; L-isoleucine from 2-oxobutanoate: step 2/4.</text>
</comment>
<comment type="pathway">
    <text evidence="1">Amino-acid biosynthesis; L-valine biosynthesis; L-valine from pyruvate: step 2/4.</text>
</comment>
<comment type="similarity">
    <text evidence="1">Belongs to the ketol-acid reductoisomerase family.</text>
</comment>
<keyword id="KW-0028">Amino-acid biosynthesis</keyword>
<keyword id="KW-0100">Branched-chain amino acid biosynthesis</keyword>
<keyword id="KW-0460">Magnesium</keyword>
<keyword id="KW-0479">Metal-binding</keyword>
<keyword id="KW-0521">NADP</keyword>
<keyword id="KW-0560">Oxidoreductase</keyword>
<gene>
    <name evidence="1" type="primary">ilvC</name>
    <name type="ordered locus">TT_C0850</name>
</gene>
<name>ILVC_THET2</name>
<reference key="1">
    <citation type="journal article" date="2004" name="Nat. Biotechnol.">
        <title>The genome sequence of the extreme thermophile Thermus thermophilus.</title>
        <authorList>
            <person name="Henne A."/>
            <person name="Brueggemann H."/>
            <person name="Raasch C."/>
            <person name="Wiezer A."/>
            <person name="Hartsch T."/>
            <person name="Liesegang H."/>
            <person name="Johann A."/>
            <person name="Lienard T."/>
            <person name="Gohl O."/>
            <person name="Martinez-Arias R."/>
            <person name="Jacobi C."/>
            <person name="Starkuviene V."/>
            <person name="Schlenczeck S."/>
            <person name="Dencker S."/>
            <person name="Huber R."/>
            <person name="Klenk H.-P."/>
            <person name="Kramer W."/>
            <person name="Merkl R."/>
            <person name="Gottschalk G."/>
            <person name="Fritz H.-J."/>
        </authorList>
    </citation>
    <scope>NUCLEOTIDE SEQUENCE [LARGE SCALE GENOMIC DNA]</scope>
    <source>
        <strain>ATCC BAA-163 / DSM 7039 / HB27</strain>
    </source>
</reference>
<organism>
    <name type="scientific">Thermus thermophilus (strain ATCC BAA-163 / DSM 7039 / HB27)</name>
    <dbReference type="NCBI Taxonomy" id="262724"/>
    <lineage>
        <taxon>Bacteria</taxon>
        <taxon>Thermotogati</taxon>
        <taxon>Deinococcota</taxon>
        <taxon>Deinococci</taxon>
        <taxon>Thermales</taxon>
        <taxon>Thermaceae</taxon>
        <taxon>Thermus</taxon>
    </lineage>
</organism>
<dbReference type="EC" id="1.1.1.86" evidence="1"/>
<dbReference type="EMBL" id="AE017221">
    <property type="protein sequence ID" value="AAS81194.1"/>
    <property type="molecule type" value="Genomic_DNA"/>
</dbReference>
<dbReference type="RefSeq" id="WP_011173279.1">
    <property type="nucleotide sequence ID" value="NC_005835.1"/>
</dbReference>
<dbReference type="EMDB" id="EMD-17963"/>
<dbReference type="SMR" id="Q72JC8"/>
<dbReference type="GeneID" id="3169032"/>
<dbReference type="KEGG" id="tth:TT_C0850"/>
<dbReference type="eggNOG" id="COG0059">
    <property type="taxonomic scope" value="Bacteria"/>
</dbReference>
<dbReference type="HOGENOM" id="CLU_033821_0_1_0"/>
<dbReference type="OrthoDB" id="9804088at2"/>
<dbReference type="UniPathway" id="UPA00047">
    <property type="reaction ID" value="UER00056"/>
</dbReference>
<dbReference type="UniPathway" id="UPA00049">
    <property type="reaction ID" value="UER00060"/>
</dbReference>
<dbReference type="Proteomes" id="UP000000592">
    <property type="component" value="Chromosome"/>
</dbReference>
<dbReference type="GO" id="GO:0005829">
    <property type="term" value="C:cytosol"/>
    <property type="evidence" value="ECO:0007669"/>
    <property type="project" value="TreeGrafter"/>
</dbReference>
<dbReference type="GO" id="GO:0004455">
    <property type="term" value="F:ketol-acid reductoisomerase activity"/>
    <property type="evidence" value="ECO:0007669"/>
    <property type="project" value="UniProtKB-UniRule"/>
</dbReference>
<dbReference type="GO" id="GO:0000287">
    <property type="term" value="F:magnesium ion binding"/>
    <property type="evidence" value="ECO:0007669"/>
    <property type="project" value="UniProtKB-UniRule"/>
</dbReference>
<dbReference type="GO" id="GO:0050661">
    <property type="term" value="F:NADP binding"/>
    <property type="evidence" value="ECO:0007669"/>
    <property type="project" value="InterPro"/>
</dbReference>
<dbReference type="GO" id="GO:0009097">
    <property type="term" value="P:isoleucine biosynthetic process"/>
    <property type="evidence" value="ECO:0007669"/>
    <property type="project" value="UniProtKB-UniRule"/>
</dbReference>
<dbReference type="GO" id="GO:0009099">
    <property type="term" value="P:L-valine biosynthetic process"/>
    <property type="evidence" value="ECO:0007669"/>
    <property type="project" value="UniProtKB-UniRule"/>
</dbReference>
<dbReference type="FunFam" id="3.40.50.720:FF:000023">
    <property type="entry name" value="Ketol-acid reductoisomerase (NADP(+))"/>
    <property type="match status" value="1"/>
</dbReference>
<dbReference type="Gene3D" id="6.10.240.10">
    <property type="match status" value="1"/>
</dbReference>
<dbReference type="Gene3D" id="3.40.50.720">
    <property type="entry name" value="NAD(P)-binding Rossmann-like Domain"/>
    <property type="match status" value="1"/>
</dbReference>
<dbReference type="HAMAP" id="MF_00435">
    <property type="entry name" value="IlvC"/>
    <property type="match status" value="1"/>
</dbReference>
<dbReference type="InterPro" id="IPR008927">
    <property type="entry name" value="6-PGluconate_DH-like_C_sf"/>
</dbReference>
<dbReference type="InterPro" id="IPR013023">
    <property type="entry name" value="KARI"/>
</dbReference>
<dbReference type="InterPro" id="IPR000506">
    <property type="entry name" value="KARI_C"/>
</dbReference>
<dbReference type="InterPro" id="IPR013116">
    <property type="entry name" value="KARI_N"/>
</dbReference>
<dbReference type="InterPro" id="IPR014359">
    <property type="entry name" value="KARI_prok"/>
</dbReference>
<dbReference type="InterPro" id="IPR036291">
    <property type="entry name" value="NAD(P)-bd_dom_sf"/>
</dbReference>
<dbReference type="NCBIfam" id="TIGR00465">
    <property type="entry name" value="ilvC"/>
    <property type="match status" value="1"/>
</dbReference>
<dbReference type="NCBIfam" id="NF004017">
    <property type="entry name" value="PRK05479.1"/>
    <property type="match status" value="1"/>
</dbReference>
<dbReference type="NCBIfam" id="NF009940">
    <property type="entry name" value="PRK13403.1"/>
    <property type="match status" value="1"/>
</dbReference>
<dbReference type="PANTHER" id="PTHR21371">
    <property type="entry name" value="KETOL-ACID REDUCTOISOMERASE, MITOCHONDRIAL"/>
    <property type="match status" value="1"/>
</dbReference>
<dbReference type="PANTHER" id="PTHR21371:SF1">
    <property type="entry name" value="KETOL-ACID REDUCTOISOMERASE, MITOCHONDRIAL"/>
    <property type="match status" value="1"/>
</dbReference>
<dbReference type="Pfam" id="PF01450">
    <property type="entry name" value="KARI_C"/>
    <property type="match status" value="1"/>
</dbReference>
<dbReference type="Pfam" id="PF07991">
    <property type="entry name" value="KARI_N"/>
    <property type="match status" value="1"/>
</dbReference>
<dbReference type="PIRSF" id="PIRSF000116">
    <property type="entry name" value="IlvC_gammaproteo"/>
    <property type="match status" value="1"/>
</dbReference>
<dbReference type="SUPFAM" id="SSF48179">
    <property type="entry name" value="6-phosphogluconate dehydrogenase C-terminal domain-like"/>
    <property type="match status" value="1"/>
</dbReference>
<dbReference type="SUPFAM" id="SSF51735">
    <property type="entry name" value="NAD(P)-binding Rossmann-fold domains"/>
    <property type="match status" value="1"/>
</dbReference>
<dbReference type="PROSITE" id="PS51851">
    <property type="entry name" value="KARI_C"/>
    <property type="match status" value="1"/>
</dbReference>
<dbReference type="PROSITE" id="PS51850">
    <property type="entry name" value="KARI_N"/>
    <property type="match status" value="1"/>
</dbReference>